<sequence length="121" mass="12142">MAFDKDAIIASLKDATILDLADLVSAIEEEFNVSAAAPVAAAGGADGAAAAKTDFDVELTSAGTAKVKVIKAVREATGLGLKEAKDLVDNAPSIVKEGLDEAAANDLKAALEETGASVTLK</sequence>
<comment type="function">
    <text evidence="1">Forms part of the ribosomal stalk which helps the ribosome interact with GTP-bound translation factors. Is thus essential for accurate translation.</text>
</comment>
<comment type="subunit">
    <text evidence="1">Homodimer. Part of the ribosomal stalk of the 50S ribosomal subunit. Forms a multimeric L10(L12)X complex, where L10 forms an elongated spine to which 2 to 4 L12 dimers bind in a sequential fashion. Binds GTP-bound translation factors.</text>
</comment>
<comment type="similarity">
    <text evidence="1">Belongs to the bacterial ribosomal protein bL12 family.</text>
</comment>
<proteinExistence type="inferred from homology"/>
<keyword id="KW-1185">Reference proteome</keyword>
<keyword id="KW-0687">Ribonucleoprotein</keyword>
<keyword id="KW-0689">Ribosomal protein</keyword>
<feature type="chain" id="PRO_1000121456" description="Large ribosomal subunit protein bL12">
    <location>
        <begin position="1"/>
        <end position="121"/>
    </location>
</feature>
<reference key="1">
    <citation type="journal article" date="2008" name="J. Bacteriol.">
        <title>Complete genome sequence of Leuconostoc citreum KM20.</title>
        <authorList>
            <person name="Kim J.F."/>
            <person name="Jeong H."/>
            <person name="Lee J.-S."/>
            <person name="Choi S.-H."/>
            <person name="Ha M."/>
            <person name="Hur C.-G."/>
            <person name="Kim J.-S."/>
            <person name="Lee S."/>
            <person name="Park H.-S."/>
            <person name="Park Y.-H."/>
            <person name="Oh T.K."/>
        </authorList>
    </citation>
    <scope>NUCLEOTIDE SEQUENCE [LARGE SCALE GENOMIC DNA]</scope>
    <source>
        <strain>KM20</strain>
    </source>
</reference>
<dbReference type="EMBL" id="DQ489736">
    <property type="protein sequence ID" value="ACA83345.1"/>
    <property type="molecule type" value="Genomic_DNA"/>
</dbReference>
<dbReference type="RefSeq" id="WP_004899246.1">
    <property type="nucleotide sequence ID" value="NC_010471.1"/>
</dbReference>
<dbReference type="SMR" id="B1MVU1"/>
<dbReference type="STRING" id="349519.LCK_01521"/>
<dbReference type="GeneID" id="61101448"/>
<dbReference type="KEGG" id="lci:LCK_01521"/>
<dbReference type="eggNOG" id="COG0222">
    <property type="taxonomic scope" value="Bacteria"/>
</dbReference>
<dbReference type="HOGENOM" id="CLU_086499_3_2_9"/>
<dbReference type="OrthoDB" id="9811748at2"/>
<dbReference type="Proteomes" id="UP000002166">
    <property type="component" value="Chromosome"/>
</dbReference>
<dbReference type="GO" id="GO:0022625">
    <property type="term" value="C:cytosolic large ribosomal subunit"/>
    <property type="evidence" value="ECO:0007669"/>
    <property type="project" value="TreeGrafter"/>
</dbReference>
<dbReference type="GO" id="GO:0003729">
    <property type="term" value="F:mRNA binding"/>
    <property type="evidence" value="ECO:0007669"/>
    <property type="project" value="TreeGrafter"/>
</dbReference>
<dbReference type="GO" id="GO:0003735">
    <property type="term" value="F:structural constituent of ribosome"/>
    <property type="evidence" value="ECO:0007669"/>
    <property type="project" value="InterPro"/>
</dbReference>
<dbReference type="GO" id="GO:0006412">
    <property type="term" value="P:translation"/>
    <property type="evidence" value="ECO:0007669"/>
    <property type="project" value="UniProtKB-UniRule"/>
</dbReference>
<dbReference type="CDD" id="cd00387">
    <property type="entry name" value="Ribosomal_L7_L12"/>
    <property type="match status" value="1"/>
</dbReference>
<dbReference type="FunFam" id="3.30.1390.10:FF:000001">
    <property type="entry name" value="50S ribosomal protein L7/L12"/>
    <property type="match status" value="1"/>
</dbReference>
<dbReference type="Gene3D" id="3.30.1390.10">
    <property type="match status" value="1"/>
</dbReference>
<dbReference type="Gene3D" id="1.20.5.710">
    <property type="entry name" value="Single helix bin"/>
    <property type="match status" value="1"/>
</dbReference>
<dbReference type="HAMAP" id="MF_00368">
    <property type="entry name" value="Ribosomal_bL12"/>
    <property type="match status" value="1"/>
</dbReference>
<dbReference type="InterPro" id="IPR000206">
    <property type="entry name" value="Ribosomal_bL12"/>
</dbReference>
<dbReference type="InterPro" id="IPR013823">
    <property type="entry name" value="Ribosomal_bL12_C"/>
</dbReference>
<dbReference type="InterPro" id="IPR014719">
    <property type="entry name" value="Ribosomal_bL12_C/ClpS-like"/>
</dbReference>
<dbReference type="InterPro" id="IPR008932">
    <property type="entry name" value="Ribosomal_bL12_oligo"/>
</dbReference>
<dbReference type="InterPro" id="IPR036235">
    <property type="entry name" value="Ribosomal_bL12_oligo_N_sf"/>
</dbReference>
<dbReference type="NCBIfam" id="TIGR00855">
    <property type="entry name" value="L12"/>
    <property type="match status" value="1"/>
</dbReference>
<dbReference type="PANTHER" id="PTHR45987">
    <property type="entry name" value="39S RIBOSOMAL PROTEIN L12"/>
    <property type="match status" value="1"/>
</dbReference>
<dbReference type="PANTHER" id="PTHR45987:SF4">
    <property type="entry name" value="LARGE RIBOSOMAL SUBUNIT PROTEIN BL12M"/>
    <property type="match status" value="1"/>
</dbReference>
<dbReference type="Pfam" id="PF00542">
    <property type="entry name" value="Ribosomal_L12"/>
    <property type="match status" value="1"/>
</dbReference>
<dbReference type="Pfam" id="PF16320">
    <property type="entry name" value="Ribosomal_L12_N"/>
    <property type="match status" value="1"/>
</dbReference>
<dbReference type="SUPFAM" id="SSF54736">
    <property type="entry name" value="ClpS-like"/>
    <property type="match status" value="1"/>
</dbReference>
<dbReference type="SUPFAM" id="SSF48300">
    <property type="entry name" value="Ribosomal protein L7/12, oligomerisation (N-terminal) domain"/>
    <property type="match status" value="1"/>
</dbReference>
<protein>
    <recommendedName>
        <fullName evidence="1">Large ribosomal subunit protein bL12</fullName>
    </recommendedName>
    <alternativeName>
        <fullName evidence="2">50S ribosomal protein L7/L12</fullName>
    </alternativeName>
</protein>
<evidence type="ECO:0000255" key="1">
    <source>
        <dbReference type="HAMAP-Rule" id="MF_00368"/>
    </source>
</evidence>
<evidence type="ECO:0000305" key="2"/>
<gene>
    <name evidence="1" type="primary">rplL</name>
    <name type="ordered locus">LCK_01521</name>
</gene>
<name>RL7_LEUCK</name>
<organism>
    <name type="scientific">Leuconostoc citreum (strain KM20)</name>
    <dbReference type="NCBI Taxonomy" id="349519"/>
    <lineage>
        <taxon>Bacteria</taxon>
        <taxon>Bacillati</taxon>
        <taxon>Bacillota</taxon>
        <taxon>Bacilli</taxon>
        <taxon>Lactobacillales</taxon>
        <taxon>Lactobacillaceae</taxon>
        <taxon>Leuconostoc</taxon>
    </lineage>
</organism>
<accession>B1MVU1</accession>